<protein>
    <recommendedName>
        <fullName evidence="1">Glycerol-3-phosphate acyltransferase</fullName>
    </recommendedName>
    <alternativeName>
        <fullName evidence="1">Acyl-PO4 G3P acyltransferase</fullName>
    </alternativeName>
    <alternativeName>
        <fullName evidence="1">Acyl-phosphate--glycerol-3-phosphate acyltransferase</fullName>
    </alternativeName>
    <alternativeName>
        <fullName evidence="1">G3P acyltransferase</fullName>
        <shortName evidence="1">GPAT</shortName>
        <ecNumber evidence="1">2.3.1.275</ecNumber>
    </alternativeName>
    <alternativeName>
        <fullName evidence="1">Lysophosphatidic acid synthase</fullName>
        <shortName evidence="1">LPA synthase</shortName>
    </alternativeName>
</protein>
<evidence type="ECO:0000255" key="1">
    <source>
        <dbReference type="HAMAP-Rule" id="MF_01043"/>
    </source>
</evidence>
<accession>Q4L661</accession>
<reference key="1">
    <citation type="journal article" date="2005" name="J. Bacteriol.">
        <title>Whole-genome sequencing of Staphylococcus haemolyticus uncovers the extreme plasticity of its genome and the evolution of human-colonizing staphylococcal species.</title>
        <authorList>
            <person name="Takeuchi F."/>
            <person name="Watanabe S."/>
            <person name="Baba T."/>
            <person name="Yuzawa H."/>
            <person name="Ito T."/>
            <person name="Morimoto Y."/>
            <person name="Kuroda M."/>
            <person name="Cui L."/>
            <person name="Takahashi M."/>
            <person name="Ankai A."/>
            <person name="Baba S."/>
            <person name="Fukui S."/>
            <person name="Lee J.C."/>
            <person name="Hiramatsu K."/>
        </authorList>
    </citation>
    <scope>NUCLEOTIDE SEQUENCE [LARGE SCALE GENOMIC DNA]</scope>
    <source>
        <strain>JCSC1435</strain>
    </source>
</reference>
<keyword id="KW-1003">Cell membrane</keyword>
<keyword id="KW-0444">Lipid biosynthesis</keyword>
<keyword id="KW-0443">Lipid metabolism</keyword>
<keyword id="KW-0472">Membrane</keyword>
<keyword id="KW-0594">Phospholipid biosynthesis</keyword>
<keyword id="KW-1208">Phospholipid metabolism</keyword>
<keyword id="KW-0808">Transferase</keyword>
<keyword id="KW-0812">Transmembrane</keyword>
<keyword id="KW-1133">Transmembrane helix</keyword>
<proteinExistence type="inferred from homology"/>
<sequence length="202" mass="22313">MMIVVMLILSYLIGAIPNGYVIGKLFFKKDIRQYGSGNTGATNSFRVLGKPAGFIVTFLDIFKGFITVFFPIWFPVHADGPLSTFFTHGLIVGLFAILGHVYPIYLRFKGGKAVATSAGVVLGVNPILLLILAIIFFGVLYIFKYVSLSSIIAAICCVIGSLIIQDYILFGMSLLVSIILIVRHRTNIVRIFKGEEPKIKWM</sequence>
<name>PLSY_STAHJ</name>
<feature type="chain" id="PRO_0000188457" description="Glycerol-3-phosphate acyltransferase">
    <location>
        <begin position="1"/>
        <end position="202"/>
    </location>
</feature>
<feature type="transmembrane region" description="Helical" evidence="1">
    <location>
        <begin position="2"/>
        <end position="22"/>
    </location>
</feature>
<feature type="transmembrane region" description="Helical" evidence="1">
    <location>
        <begin position="54"/>
        <end position="74"/>
    </location>
</feature>
<feature type="transmembrane region" description="Helical" evidence="1">
    <location>
        <begin position="85"/>
        <end position="105"/>
    </location>
</feature>
<feature type="transmembrane region" description="Helical" evidence="1">
    <location>
        <begin position="120"/>
        <end position="140"/>
    </location>
</feature>
<feature type="transmembrane region" description="Helical" evidence="1">
    <location>
        <begin position="141"/>
        <end position="161"/>
    </location>
</feature>
<feature type="transmembrane region" description="Helical" evidence="1">
    <location>
        <begin position="162"/>
        <end position="182"/>
    </location>
</feature>
<dbReference type="EC" id="2.3.1.275" evidence="1"/>
<dbReference type="EMBL" id="AP006716">
    <property type="protein sequence ID" value="BAE04864.1"/>
    <property type="molecule type" value="Genomic_DNA"/>
</dbReference>
<dbReference type="RefSeq" id="WP_011275846.1">
    <property type="nucleotide sequence ID" value="NC_007168.1"/>
</dbReference>
<dbReference type="SMR" id="Q4L661"/>
<dbReference type="GeneID" id="93780942"/>
<dbReference type="KEGG" id="sha:SH1555"/>
<dbReference type="eggNOG" id="COG0344">
    <property type="taxonomic scope" value="Bacteria"/>
</dbReference>
<dbReference type="HOGENOM" id="CLU_081254_4_0_9"/>
<dbReference type="OrthoDB" id="9777124at2"/>
<dbReference type="UniPathway" id="UPA00085"/>
<dbReference type="Proteomes" id="UP000000543">
    <property type="component" value="Chromosome"/>
</dbReference>
<dbReference type="GO" id="GO:0005886">
    <property type="term" value="C:plasma membrane"/>
    <property type="evidence" value="ECO:0007669"/>
    <property type="project" value="UniProtKB-SubCell"/>
</dbReference>
<dbReference type="GO" id="GO:0043772">
    <property type="term" value="F:acyl-phosphate glycerol-3-phosphate acyltransferase activity"/>
    <property type="evidence" value="ECO:0007669"/>
    <property type="project" value="UniProtKB-UniRule"/>
</dbReference>
<dbReference type="GO" id="GO:0008654">
    <property type="term" value="P:phospholipid biosynthetic process"/>
    <property type="evidence" value="ECO:0007669"/>
    <property type="project" value="UniProtKB-UniRule"/>
</dbReference>
<dbReference type="HAMAP" id="MF_01043">
    <property type="entry name" value="PlsY"/>
    <property type="match status" value="1"/>
</dbReference>
<dbReference type="InterPro" id="IPR003811">
    <property type="entry name" value="G3P_acylTferase_PlsY"/>
</dbReference>
<dbReference type="NCBIfam" id="TIGR00023">
    <property type="entry name" value="glycerol-3-phosphate 1-O-acyltransferase PlsY"/>
    <property type="match status" value="1"/>
</dbReference>
<dbReference type="PANTHER" id="PTHR30309:SF0">
    <property type="entry name" value="GLYCEROL-3-PHOSPHATE ACYLTRANSFERASE-RELATED"/>
    <property type="match status" value="1"/>
</dbReference>
<dbReference type="PANTHER" id="PTHR30309">
    <property type="entry name" value="INNER MEMBRANE PROTEIN YGIH"/>
    <property type="match status" value="1"/>
</dbReference>
<dbReference type="Pfam" id="PF02660">
    <property type="entry name" value="G3P_acyltransf"/>
    <property type="match status" value="1"/>
</dbReference>
<dbReference type="SMART" id="SM01207">
    <property type="entry name" value="G3P_acyltransf"/>
    <property type="match status" value="1"/>
</dbReference>
<organism>
    <name type="scientific">Staphylococcus haemolyticus (strain JCSC1435)</name>
    <dbReference type="NCBI Taxonomy" id="279808"/>
    <lineage>
        <taxon>Bacteria</taxon>
        <taxon>Bacillati</taxon>
        <taxon>Bacillota</taxon>
        <taxon>Bacilli</taxon>
        <taxon>Bacillales</taxon>
        <taxon>Staphylococcaceae</taxon>
        <taxon>Staphylococcus</taxon>
    </lineage>
</organism>
<gene>
    <name evidence="1" type="primary">plsY</name>
    <name type="ordered locus">SH1555</name>
</gene>
<comment type="function">
    <text evidence="1">Catalyzes the transfer of an acyl group from acyl-phosphate (acyl-PO(4)) to glycerol-3-phosphate (G3P) to form lysophosphatidic acid (LPA). This enzyme utilizes acyl-phosphate as fatty acyl donor, but not acyl-CoA or acyl-ACP.</text>
</comment>
<comment type="catalytic activity">
    <reaction evidence="1">
        <text>an acyl phosphate + sn-glycerol 3-phosphate = a 1-acyl-sn-glycero-3-phosphate + phosphate</text>
        <dbReference type="Rhea" id="RHEA:34075"/>
        <dbReference type="ChEBI" id="CHEBI:43474"/>
        <dbReference type="ChEBI" id="CHEBI:57597"/>
        <dbReference type="ChEBI" id="CHEBI:57970"/>
        <dbReference type="ChEBI" id="CHEBI:59918"/>
        <dbReference type="EC" id="2.3.1.275"/>
    </reaction>
</comment>
<comment type="pathway">
    <text evidence="1">Lipid metabolism; phospholipid metabolism.</text>
</comment>
<comment type="subunit">
    <text evidence="1">Probably interacts with PlsX.</text>
</comment>
<comment type="subcellular location">
    <subcellularLocation>
        <location evidence="1">Cell membrane</location>
        <topology evidence="1">Multi-pass membrane protein</topology>
    </subcellularLocation>
</comment>
<comment type="similarity">
    <text evidence="1">Belongs to the PlsY family.</text>
</comment>